<comment type="catalytic activity">
    <reaction evidence="1">
        <text>tRNA(Gly) + glycine + ATP = glycyl-tRNA(Gly) + AMP + diphosphate</text>
        <dbReference type="Rhea" id="RHEA:16013"/>
        <dbReference type="Rhea" id="RHEA-COMP:9664"/>
        <dbReference type="Rhea" id="RHEA-COMP:9683"/>
        <dbReference type="ChEBI" id="CHEBI:30616"/>
        <dbReference type="ChEBI" id="CHEBI:33019"/>
        <dbReference type="ChEBI" id="CHEBI:57305"/>
        <dbReference type="ChEBI" id="CHEBI:78442"/>
        <dbReference type="ChEBI" id="CHEBI:78522"/>
        <dbReference type="ChEBI" id="CHEBI:456215"/>
        <dbReference type="EC" id="6.1.1.14"/>
    </reaction>
</comment>
<comment type="subunit">
    <text evidence="1">Tetramer of two alpha and two beta subunits.</text>
</comment>
<comment type="subcellular location">
    <subcellularLocation>
        <location evidence="1">Cytoplasm</location>
    </subcellularLocation>
</comment>
<comment type="similarity">
    <text evidence="1">Belongs to the class-II aminoacyl-tRNA synthetase family.</text>
</comment>
<protein>
    <recommendedName>
        <fullName evidence="1">Glycine--tRNA ligase alpha subunit</fullName>
        <ecNumber evidence="1">6.1.1.14</ecNumber>
    </recommendedName>
    <alternativeName>
        <fullName evidence="1">Glycyl-tRNA synthetase alpha subunit</fullName>
        <shortName evidence="1">GlyRS</shortName>
    </alternativeName>
</protein>
<dbReference type="EC" id="6.1.1.14" evidence="1"/>
<dbReference type="EMBL" id="CP000503">
    <property type="protein sequence ID" value="ABM22860.1"/>
    <property type="molecule type" value="Genomic_DNA"/>
</dbReference>
<dbReference type="RefSeq" id="WP_011070431.1">
    <property type="nucleotide sequence ID" value="NC_008750.1"/>
</dbReference>
<dbReference type="SMR" id="A1RDW5"/>
<dbReference type="GeneID" id="67441599"/>
<dbReference type="KEGG" id="shw:Sputw3181_0007"/>
<dbReference type="HOGENOM" id="CLU_057066_1_0_6"/>
<dbReference type="Proteomes" id="UP000002597">
    <property type="component" value="Chromosome"/>
</dbReference>
<dbReference type="GO" id="GO:0005829">
    <property type="term" value="C:cytosol"/>
    <property type="evidence" value="ECO:0007669"/>
    <property type="project" value="TreeGrafter"/>
</dbReference>
<dbReference type="GO" id="GO:0005524">
    <property type="term" value="F:ATP binding"/>
    <property type="evidence" value="ECO:0007669"/>
    <property type="project" value="UniProtKB-UniRule"/>
</dbReference>
<dbReference type="GO" id="GO:0004820">
    <property type="term" value="F:glycine-tRNA ligase activity"/>
    <property type="evidence" value="ECO:0007669"/>
    <property type="project" value="UniProtKB-UniRule"/>
</dbReference>
<dbReference type="GO" id="GO:0006426">
    <property type="term" value="P:glycyl-tRNA aminoacylation"/>
    <property type="evidence" value="ECO:0007669"/>
    <property type="project" value="UniProtKB-UniRule"/>
</dbReference>
<dbReference type="CDD" id="cd00733">
    <property type="entry name" value="GlyRS_alpha_core"/>
    <property type="match status" value="1"/>
</dbReference>
<dbReference type="FunFam" id="3.30.930.10:FF:000006">
    <property type="entry name" value="Glycine--tRNA ligase alpha subunit"/>
    <property type="match status" value="1"/>
</dbReference>
<dbReference type="Gene3D" id="3.30.930.10">
    <property type="entry name" value="Bira Bifunctional Protein, Domain 2"/>
    <property type="match status" value="1"/>
</dbReference>
<dbReference type="Gene3D" id="1.20.58.180">
    <property type="entry name" value="Class II aaRS and biotin synthetases, domain 2"/>
    <property type="match status" value="1"/>
</dbReference>
<dbReference type="HAMAP" id="MF_00254">
    <property type="entry name" value="Gly_tRNA_synth_alpha"/>
    <property type="match status" value="1"/>
</dbReference>
<dbReference type="InterPro" id="IPR045864">
    <property type="entry name" value="aa-tRNA-synth_II/BPL/LPL"/>
</dbReference>
<dbReference type="InterPro" id="IPR006194">
    <property type="entry name" value="Gly-tRNA-synth_heterodimer"/>
</dbReference>
<dbReference type="InterPro" id="IPR002310">
    <property type="entry name" value="Gly-tRNA_ligase_asu"/>
</dbReference>
<dbReference type="NCBIfam" id="TIGR00388">
    <property type="entry name" value="glyQ"/>
    <property type="match status" value="1"/>
</dbReference>
<dbReference type="NCBIfam" id="NF006827">
    <property type="entry name" value="PRK09348.1"/>
    <property type="match status" value="1"/>
</dbReference>
<dbReference type="PANTHER" id="PTHR30075:SF2">
    <property type="entry name" value="GLYCINE--TRNA LIGASE, CHLOROPLASTIC_MITOCHONDRIAL 2"/>
    <property type="match status" value="1"/>
</dbReference>
<dbReference type="PANTHER" id="PTHR30075">
    <property type="entry name" value="GLYCYL-TRNA SYNTHETASE"/>
    <property type="match status" value="1"/>
</dbReference>
<dbReference type="Pfam" id="PF02091">
    <property type="entry name" value="tRNA-synt_2e"/>
    <property type="match status" value="1"/>
</dbReference>
<dbReference type="PRINTS" id="PR01044">
    <property type="entry name" value="TRNASYNTHGA"/>
</dbReference>
<dbReference type="SUPFAM" id="SSF55681">
    <property type="entry name" value="Class II aaRS and biotin synthetases"/>
    <property type="match status" value="1"/>
</dbReference>
<dbReference type="PROSITE" id="PS50861">
    <property type="entry name" value="AA_TRNA_LIGASE_II_GLYAB"/>
    <property type="match status" value="1"/>
</dbReference>
<organism>
    <name type="scientific">Shewanella sp. (strain W3-18-1)</name>
    <dbReference type="NCBI Taxonomy" id="351745"/>
    <lineage>
        <taxon>Bacteria</taxon>
        <taxon>Pseudomonadati</taxon>
        <taxon>Pseudomonadota</taxon>
        <taxon>Gammaproteobacteria</taxon>
        <taxon>Alteromonadales</taxon>
        <taxon>Shewanellaceae</taxon>
        <taxon>Shewanella</taxon>
    </lineage>
</organism>
<feature type="chain" id="PRO_1000047492" description="Glycine--tRNA ligase alpha subunit">
    <location>
        <begin position="1"/>
        <end position="301"/>
    </location>
</feature>
<proteinExistence type="inferred from homology"/>
<keyword id="KW-0030">Aminoacyl-tRNA synthetase</keyword>
<keyword id="KW-0067">ATP-binding</keyword>
<keyword id="KW-0963">Cytoplasm</keyword>
<keyword id="KW-0436">Ligase</keyword>
<keyword id="KW-0547">Nucleotide-binding</keyword>
<keyword id="KW-0648">Protein biosynthesis</keyword>
<sequence length="301" mass="34478">MTTKHDVKTFQGFILTLQEYWAQQGCAIVQPLDMEVGAGTFHPQTFLRSLGPEPMSSAYVQPSRRPTDGRYGENPNRLQHYYQFQVVLKPSPDNIQELYLGSLQALGIDTQIHDIRFVEDNWESPTLGAWGLGWEVWLNGMEVTQFTYFQQVGGLECSPVTGEITYGLERLAMYIQGVDSVYDLVWTDGPMGRITYGDVFHQNEVEQSTYNFEHADVDFMFALFDQCEKMCQHLLSLEKPLPLPAYEQVMKASHAFNLLDARHAISVTERQRYILRVRTMAKAVAESYYQAREALGFPMCK</sequence>
<evidence type="ECO:0000255" key="1">
    <source>
        <dbReference type="HAMAP-Rule" id="MF_00254"/>
    </source>
</evidence>
<reference key="1">
    <citation type="submission" date="2006-12" db="EMBL/GenBank/DDBJ databases">
        <title>Complete sequence of Shewanella sp. W3-18-1.</title>
        <authorList>
            <consortium name="US DOE Joint Genome Institute"/>
            <person name="Copeland A."/>
            <person name="Lucas S."/>
            <person name="Lapidus A."/>
            <person name="Barry K."/>
            <person name="Detter J.C."/>
            <person name="Glavina del Rio T."/>
            <person name="Hammon N."/>
            <person name="Israni S."/>
            <person name="Dalin E."/>
            <person name="Tice H."/>
            <person name="Pitluck S."/>
            <person name="Chain P."/>
            <person name="Malfatti S."/>
            <person name="Shin M."/>
            <person name="Vergez L."/>
            <person name="Schmutz J."/>
            <person name="Larimer F."/>
            <person name="Land M."/>
            <person name="Hauser L."/>
            <person name="Kyrpides N."/>
            <person name="Lykidis A."/>
            <person name="Tiedje J."/>
            <person name="Richardson P."/>
        </authorList>
    </citation>
    <scope>NUCLEOTIDE SEQUENCE [LARGE SCALE GENOMIC DNA]</scope>
    <source>
        <strain>W3-18-1</strain>
    </source>
</reference>
<accession>A1RDW5</accession>
<gene>
    <name evidence="1" type="primary">glyQ</name>
    <name type="ordered locus">Sputw3181_0007</name>
</gene>
<name>SYGA_SHESW</name>